<organism>
    <name type="scientific">Methanococcus aeolicus (strain ATCC BAA-1280 / DSM 17508 / OCM 812 / Nankai-3)</name>
    <dbReference type="NCBI Taxonomy" id="419665"/>
    <lineage>
        <taxon>Archaea</taxon>
        <taxon>Methanobacteriati</taxon>
        <taxon>Methanobacteriota</taxon>
        <taxon>Methanomada group</taxon>
        <taxon>Methanococci</taxon>
        <taxon>Methanococcales</taxon>
        <taxon>Methanococcaceae</taxon>
        <taxon>Methanococcus</taxon>
    </lineage>
</organism>
<accession>A6UTK4</accession>
<feature type="chain" id="PRO_0000318775" description="Proline--tRNA ligase">
    <location>
        <begin position="1"/>
        <end position="456"/>
    </location>
</feature>
<comment type="function">
    <text evidence="1">Catalyzes the attachment of proline to tRNA(Pro) in a two-step reaction: proline is first activated by ATP to form Pro-AMP and then transferred to the acceptor end of tRNA(Pro).</text>
</comment>
<comment type="catalytic activity">
    <reaction evidence="1">
        <text>tRNA(Pro) + L-proline + ATP = L-prolyl-tRNA(Pro) + AMP + diphosphate</text>
        <dbReference type="Rhea" id="RHEA:14305"/>
        <dbReference type="Rhea" id="RHEA-COMP:9700"/>
        <dbReference type="Rhea" id="RHEA-COMP:9702"/>
        <dbReference type="ChEBI" id="CHEBI:30616"/>
        <dbReference type="ChEBI" id="CHEBI:33019"/>
        <dbReference type="ChEBI" id="CHEBI:60039"/>
        <dbReference type="ChEBI" id="CHEBI:78442"/>
        <dbReference type="ChEBI" id="CHEBI:78532"/>
        <dbReference type="ChEBI" id="CHEBI:456215"/>
        <dbReference type="EC" id="6.1.1.15"/>
    </reaction>
</comment>
<comment type="subunit">
    <text evidence="1">Homodimer.</text>
</comment>
<comment type="subcellular location">
    <subcellularLocation>
        <location evidence="1">Cytoplasm</location>
    </subcellularLocation>
</comment>
<comment type="domain">
    <text evidence="1">Consists of three domains: the N-terminal catalytic domain, the anticodon-binding domain and the C-terminal extension.</text>
</comment>
<comment type="similarity">
    <text evidence="1">Belongs to the class-II aminoacyl-tRNA synthetase family. ProS type 3 subfamily.</text>
</comment>
<dbReference type="EC" id="6.1.1.15" evidence="1"/>
<dbReference type="EMBL" id="CP000743">
    <property type="protein sequence ID" value="ABR55826.1"/>
    <property type="molecule type" value="Genomic_DNA"/>
</dbReference>
<dbReference type="RefSeq" id="WP_011972958.1">
    <property type="nucleotide sequence ID" value="NC_009635.1"/>
</dbReference>
<dbReference type="SMR" id="A6UTK4"/>
<dbReference type="STRING" id="419665.Maeo_0234"/>
<dbReference type="GeneID" id="5326817"/>
<dbReference type="KEGG" id="mae:Maeo_0234"/>
<dbReference type="eggNOG" id="arCOG00402">
    <property type="taxonomic scope" value="Archaea"/>
</dbReference>
<dbReference type="HOGENOM" id="CLU_001882_4_2_2"/>
<dbReference type="OrthoDB" id="7375at2157"/>
<dbReference type="Proteomes" id="UP000001106">
    <property type="component" value="Chromosome"/>
</dbReference>
<dbReference type="GO" id="GO:0017101">
    <property type="term" value="C:aminoacyl-tRNA synthetase multienzyme complex"/>
    <property type="evidence" value="ECO:0007669"/>
    <property type="project" value="TreeGrafter"/>
</dbReference>
<dbReference type="GO" id="GO:0005737">
    <property type="term" value="C:cytoplasm"/>
    <property type="evidence" value="ECO:0007669"/>
    <property type="project" value="UniProtKB-SubCell"/>
</dbReference>
<dbReference type="GO" id="GO:0005524">
    <property type="term" value="F:ATP binding"/>
    <property type="evidence" value="ECO:0007669"/>
    <property type="project" value="UniProtKB-UniRule"/>
</dbReference>
<dbReference type="GO" id="GO:0004827">
    <property type="term" value="F:proline-tRNA ligase activity"/>
    <property type="evidence" value="ECO:0007669"/>
    <property type="project" value="UniProtKB-UniRule"/>
</dbReference>
<dbReference type="GO" id="GO:0006433">
    <property type="term" value="P:prolyl-tRNA aminoacylation"/>
    <property type="evidence" value="ECO:0007669"/>
    <property type="project" value="UniProtKB-UniRule"/>
</dbReference>
<dbReference type="CDD" id="cd00778">
    <property type="entry name" value="ProRS_core_arch_euk"/>
    <property type="match status" value="1"/>
</dbReference>
<dbReference type="FunFam" id="3.30.930.10:FF:000037">
    <property type="entry name" value="Proline--tRNA ligase"/>
    <property type="match status" value="1"/>
</dbReference>
<dbReference type="Gene3D" id="3.40.50.800">
    <property type="entry name" value="Anticodon-binding domain"/>
    <property type="match status" value="1"/>
</dbReference>
<dbReference type="Gene3D" id="3.30.930.10">
    <property type="entry name" value="Bira Bifunctional Protein, Domain 2"/>
    <property type="match status" value="1"/>
</dbReference>
<dbReference type="Gene3D" id="3.30.110.30">
    <property type="entry name" value="C-terminal domain of ProRS"/>
    <property type="match status" value="1"/>
</dbReference>
<dbReference type="HAMAP" id="MF_01571">
    <property type="entry name" value="Pro_tRNA_synth_type3"/>
    <property type="match status" value="1"/>
</dbReference>
<dbReference type="InterPro" id="IPR002314">
    <property type="entry name" value="aa-tRNA-synt_IIb"/>
</dbReference>
<dbReference type="InterPro" id="IPR006195">
    <property type="entry name" value="aa-tRNA-synth_II"/>
</dbReference>
<dbReference type="InterPro" id="IPR045864">
    <property type="entry name" value="aa-tRNA-synth_II/BPL/LPL"/>
</dbReference>
<dbReference type="InterPro" id="IPR004154">
    <property type="entry name" value="Anticodon-bd"/>
</dbReference>
<dbReference type="InterPro" id="IPR036621">
    <property type="entry name" value="Anticodon-bd_dom_sf"/>
</dbReference>
<dbReference type="InterPro" id="IPR002316">
    <property type="entry name" value="Pro-tRNA-ligase_IIa"/>
</dbReference>
<dbReference type="InterPro" id="IPR004499">
    <property type="entry name" value="Pro-tRNA-ligase_IIa_arc-type"/>
</dbReference>
<dbReference type="InterPro" id="IPR017449">
    <property type="entry name" value="Pro-tRNA_synth_II"/>
</dbReference>
<dbReference type="InterPro" id="IPR015264">
    <property type="entry name" value="Pro-tRNA_synth_II_arc"/>
</dbReference>
<dbReference type="InterPro" id="IPR033721">
    <property type="entry name" value="ProRS_core_arch_euk"/>
</dbReference>
<dbReference type="NCBIfam" id="TIGR00408">
    <property type="entry name" value="proS_fam_I"/>
    <property type="match status" value="1"/>
</dbReference>
<dbReference type="PANTHER" id="PTHR43382:SF2">
    <property type="entry name" value="BIFUNCTIONAL GLUTAMATE_PROLINE--TRNA LIGASE"/>
    <property type="match status" value="1"/>
</dbReference>
<dbReference type="PANTHER" id="PTHR43382">
    <property type="entry name" value="PROLYL-TRNA SYNTHETASE"/>
    <property type="match status" value="1"/>
</dbReference>
<dbReference type="Pfam" id="PF03129">
    <property type="entry name" value="HGTP_anticodon"/>
    <property type="match status" value="1"/>
</dbReference>
<dbReference type="Pfam" id="PF09181">
    <property type="entry name" value="ProRS-C_2"/>
    <property type="match status" value="1"/>
</dbReference>
<dbReference type="Pfam" id="PF00587">
    <property type="entry name" value="tRNA-synt_2b"/>
    <property type="match status" value="1"/>
</dbReference>
<dbReference type="PRINTS" id="PR01046">
    <property type="entry name" value="TRNASYNTHPRO"/>
</dbReference>
<dbReference type="SUPFAM" id="SSF64586">
    <property type="entry name" value="C-terminal domain of ProRS"/>
    <property type="match status" value="1"/>
</dbReference>
<dbReference type="SUPFAM" id="SSF52954">
    <property type="entry name" value="Class II aaRS ABD-related"/>
    <property type="match status" value="1"/>
</dbReference>
<dbReference type="SUPFAM" id="SSF55681">
    <property type="entry name" value="Class II aaRS and biotin synthetases"/>
    <property type="match status" value="1"/>
</dbReference>
<dbReference type="PROSITE" id="PS50862">
    <property type="entry name" value="AA_TRNA_LIGASE_II"/>
    <property type="match status" value="1"/>
</dbReference>
<gene>
    <name evidence="1" type="primary">proS</name>
    <name type="ordered locus">Maeo_0234</name>
</gene>
<keyword id="KW-0030">Aminoacyl-tRNA synthetase</keyword>
<keyword id="KW-0067">ATP-binding</keyword>
<keyword id="KW-0963">Cytoplasm</keyword>
<keyword id="KW-0436">Ligase</keyword>
<keyword id="KW-0547">Nucleotide-binding</keyword>
<keyword id="KW-0648">Protein biosynthesis</keyword>
<sequence>MENFSEWYHNILETAGIYDLRYPLKGCGVYLPYGFKIRRYAFEAIRDMLDESNHDEALFPMLIPEDLLAKEGEHIKGFEEEVYWVTHGGTTPLDVKLALRPTSETPIYHMMKLWIKVHTDLPIKIYQIVNSFRYETKHTRPLIRLREIMTFKEAHTAHSTSEEAEAQVQTALNIYKTFFDRMGVPTIVSQRPEWDKFPGADYTMAFDTIFPDGKTMQIGTVHNLGQHFAKTFELEFETPEGGKDYAYQTCYGISDRIIASIIALHGDEKGLILPPEVAPHQIIIIPLLFKGKEEIAMNKAKEIYKSLKNTYRVKLDDRDIRPGKKFNDWELKGAPIRIELGPRDIENNKLTIYRRDTGEKFQIDEDNLLNELNTLIDSIENTIKEKAEQKVKSFITILDNHDVNNIKETLSTKKGVVLVPYDENIYTEEFEEEIDASVLGTTEYDGKKYISIAKTY</sequence>
<name>SYP_META3</name>
<proteinExistence type="inferred from homology"/>
<reference key="1">
    <citation type="submission" date="2007-06" db="EMBL/GenBank/DDBJ databases">
        <title>Complete sequence of Methanococcus aeolicus Nankai-3.</title>
        <authorList>
            <consortium name="US DOE Joint Genome Institute"/>
            <person name="Copeland A."/>
            <person name="Lucas S."/>
            <person name="Lapidus A."/>
            <person name="Barry K."/>
            <person name="Glavina del Rio T."/>
            <person name="Dalin E."/>
            <person name="Tice H."/>
            <person name="Pitluck S."/>
            <person name="Chain P."/>
            <person name="Malfatti S."/>
            <person name="Shin M."/>
            <person name="Vergez L."/>
            <person name="Schmutz J."/>
            <person name="Larimer F."/>
            <person name="Land M."/>
            <person name="Hauser L."/>
            <person name="Kyrpides N."/>
            <person name="Lykidis A."/>
            <person name="Sieprawska-Lupa M."/>
            <person name="Whitman W.B."/>
            <person name="Richardson P."/>
        </authorList>
    </citation>
    <scope>NUCLEOTIDE SEQUENCE [LARGE SCALE GENOMIC DNA]</scope>
    <source>
        <strain>ATCC BAA-1280 / DSM 17508 / OCM 812 / Nankai-3</strain>
    </source>
</reference>
<protein>
    <recommendedName>
        <fullName evidence="1">Proline--tRNA ligase</fullName>
        <ecNumber evidence="1">6.1.1.15</ecNumber>
    </recommendedName>
    <alternativeName>
        <fullName evidence="1">Prolyl-tRNA synthetase</fullName>
        <shortName evidence="1">ProRS</shortName>
    </alternativeName>
</protein>
<evidence type="ECO:0000255" key="1">
    <source>
        <dbReference type="HAMAP-Rule" id="MF_01571"/>
    </source>
</evidence>